<proteinExistence type="inferred from homology"/>
<reference key="1">
    <citation type="journal article" date="2004" name="Nature">
        <title>Genome evolution in yeasts.</title>
        <authorList>
            <person name="Dujon B."/>
            <person name="Sherman D."/>
            <person name="Fischer G."/>
            <person name="Durrens P."/>
            <person name="Casaregola S."/>
            <person name="Lafontaine I."/>
            <person name="de Montigny J."/>
            <person name="Marck C."/>
            <person name="Neuveglise C."/>
            <person name="Talla E."/>
            <person name="Goffard N."/>
            <person name="Frangeul L."/>
            <person name="Aigle M."/>
            <person name="Anthouard V."/>
            <person name="Babour A."/>
            <person name="Barbe V."/>
            <person name="Barnay S."/>
            <person name="Blanchin S."/>
            <person name="Beckerich J.-M."/>
            <person name="Beyne E."/>
            <person name="Bleykasten C."/>
            <person name="Boisrame A."/>
            <person name="Boyer J."/>
            <person name="Cattolico L."/>
            <person name="Confanioleri F."/>
            <person name="de Daruvar A."/>
            <person name="Despons L."/>
            <person name="Fabre E."/>
            <person name="Fairhead C."/>
            <person name="Ferry-Dumazet H."/>
            <person name="Groppi A."/>
            <person name="Hantraye F."/>
            <person name="Hennequin C."/>
            <person name="Jauniaux N."/>
            <person name="Joyet P."/>
            <person name="Kachouri R."/>
            <person name="Kerrest A."/>
            <person name="Koszul R."/>
            <person name="Lemaire M."/>
            <person name="Lesur I."/>
            <person name="Ma L."/>
            <person name="Muller H."/>
            <person name="Nicaud J.-M."/>
            <person name="Nikolski M."/>
            <person name="Oztas S."/>
            <person name="Ozier-Kalogeropoulos O."/>
            <person name="Pellenz S."/>
            <person name="Potier S."/>
            <person name="Richard G.-F."/>
            <person name="Straub M.-L."/>
            <person name="Suleau A."/>
            <person name="Swennen D."/>
            <person name="Tekaia F."/>
            <person name="Wesolowski-Louvel M."/>
            <person name="Westhof E."/>
            <person name="Wirth B."/>
            <person name="Zeniou-Meyer M."/>
            <person name="Zivanovic Y."/>
            <person name="Bolotin-Fukuhara M."/>
            <person name="Thierry A."/>
            <person name="Bouchier C."/>
            <person name="Caudron B."/>
            <person name="Scarpelli C."/>
            <person name="Gaillardin C."/>
            <person name="Weissenbach J."/>
            <person name="Wincker P."/>
            <person name="Souciet J.-L."/>
        </authorList>
    </citation>
    <scope>NUCLEOTIDE SEQUENCE [LARGE SCALE GENOMIC DNA]</scope>
    <source>
        <strain>ATCC 2001 / BCRC 20586 / JCM 3761 / NBRC 0622 / NRRL Y-65 / CBS 138</strain>
    </source>
</reference>
<keyword id="KW-0963">Cytoplasm</keyword>
<keyword id="KW-1017">Isopeptide bond</keyword>
<keyword id="KW-1185">Reference proteome</keyword>
<keyword id="KW-0819">tRNA processing</keyword>
<keyword id="KW-0833">Ubl conjugation pathway</keyword>
<evidence type="ECO:0000255" key="1">
    <source>
        <dbReference type="HAMAP-Rule" id="MF_03048"/>
    </source>
</evidence>
<organism>
    <name type="scientific">Candida glabrata (strain ATCC 2001 / BCRC 20586 / JCM 3761 / NBRC 0622 / NRRL Y-65 / CBS 138)</name>
    <name type="common">Yeast</name>
    <name type="synonym">Nakaseomyces glabratus</name>
    <dbReference type="NCBI Taxonomy" id="284593"/>
    <lineage>
        <taxon>Eukaryota</taxon>
        <taxon>Fungi</taxon>
        <taxon>Dikarya</taxon>
        <taxon>Ascomycota</taxon>
        <taxon>Saccharomycotina</taxon>
        <taxon>Saccharomycetes</taxon>
        <taxon>Saccharomycetales</taxon>
        <taxon>Saccharomycetaceae</taxon>
        <taxon>Nakaseomyces</taxon>
    </lineage>
</organism>
<comment type="function">
    <text evidence="1">Acts as a sulfur carrier required for 2-thiolation of mcm(5)S(2)U at tRNA wobble positions of cytosolic tRNA(Lys), tRNA(Glu) and tRNA(Gln). Serves as sulfur donor in tRNA 2-thiolation reaction by being thiocarboxylated (-COSH) at its C-terminus by the MOCS3 homolog UBA4. The sulfur is then transferred to tRNA to form 2-thiolation of mcm(5)S(2)U. Prior mcm(5) tRNA modification by the elongator complex is required for 2-thiolation. Also acts as a ubiquitin-like protein (UBL) that is covalently conjugated via an isopeptide bond to lysine residues of target proteins such as AHP1. The thiocarboxylated form serves as substrate for conjugation and oxidative stress specifically induces the formation of UBL-protein conjugates.</text>
</comment>
<comment type="pathway">
    <text evidence="1">tRNA modification; 5-methoxycarbonylmethyl-2-thiouridine-tRNA biosynthesis.</text>
</comment>
<comment type="subcellular location">
    <subcellularLocation>
        <location evidence="1">Cytoplasm</location>
    </subcellularLocation>
</comment>
<comment type="PTM">
    <text evidence="1">C-terminal thiocarboxylation occurs in 2 steps, it is first acyl-adenylated (-COAMP) via the hesA/moeB/thiF part of UBA4, then thiocarboxylated (-COSH) via the rhodanese domain of UBA4.</text>
</comment>
<comment type="similarity">
    <text evidence="1">Belongs to the URM1 family.</text>
</comment>
<sequence length="98" mass="11125">MVKVRVEFLGGLDVIVNKQRVYDLDVPSQVENVGDLIDYIIENLITNKKDVEVFIENDSIRPGIITLINDTDWELENEKEYVIEDGDVISFTSTLHGG</sequence>
<gene>
    <name evidence="1" type="primary">URM1</name>
    <name type="ordered locus">CAGL0C03784g</name>
</gene>
<protein>
    <recommendedName>
        <fullName evidence="1">Ubiquitin-related modifier 1</fullName>
    </recommendedName>
</protein>
<accession>Q6FWQ3</accession>
<name>URM1_CANGA</name>
<feature type="chain" id="PRO_0000367878" description="Ubiquitin-related modifier 1">
    <location>
        <begin position="1"/>
        <end position="98"/>
    </location>
</feature>
<feature type="modified residue" description="1-thioglycine" evidence="1">
    <location>
        <position position="98"/>
    </location>
</feature>
<feature type="cross-link" description="Glycyl lysine isopeptide (Gly-Lys) (interchain with K-? in acceptor proteins)" evidence="1">
    <location>
        <position position="98"/>
    </location>
</feature>
<dbReference type="EMBL" id="CR380949">
    <property type="protein sequence ID" value="CAG58247.1"/>
    <property type="molecule type" value="Genomic_DNA"/>
</dbReference>
<dbReference type="RefSeq" id="XP_445341.1">
    <property type="nucleotide sequence ID" value="XM_445341.1"/>
</dbReference>
<dbReference type="SMR" id="Q6FWQ3"/>
<dbReference type="FunCoup" id="Q6FWQ3">
    <property type="interactions" value="951"/>
</dbReference>
<dbReference type="STRING" id="284593.Q6FWQ3"/>
<dbReference type="EnsemblFungi" id="CAGL0C03784g-T">
    <property type="protein sequence ID" value="CAGL0C03784g-T-p1"/>
    <property type="gene ID" value="CAGL0C03784g"/>
</dbReference>
<dbReference type="KEGG" id="cgr:2886829"/>
<dbReference type="CGD" id="CAL0127536">
    <property type="gene designation" value="CAGL0C03784g"/>
</dbReference>
<dbReference type="VEuPathDB" id="FungiDB:B1J91_C03784g"/>
<dbReference type="VEuPathDB" id="FungiDB:CAGL0C03784g"/>
<dbReference type="eggNOG" id="KOG4146">
    <property type="taxonomic scope" value="Eukaryota"/>
</dbReference>
<dbReference type="HOGENOM" id="CLU_148208_0_0_1"/>
<dbReference type="InParanoid" id="Q6FWQ3"/>
<dbReference type="OMA" id="IHFMAEK"/>
<dbReference type="UniPathway" id="UPA00988"/>
<dbReference type="Proteomes" id="UP000002428">
    <property type="component" value="Chromosome C"/>
</dbReference>
<dbReference type="GO" id="GO:0005829">
    <property type="term" value="C:cytosol"/>
    <property type="evidence" value="ECO:0007669"/>
    <property type="project" value="UniProtKB-UniRule"/>
</dbReference>
<dbReference type="GO" id="GO:0042803">
    <property type="term" value="F:protein homodimerization activity"/>
    <property type="evidence" value="ECO:0007669"/>
    <property type="project" value="EnsemblFungi"/>
</dbReference>
<dbReference type="GO" id="GO:0031386">
    <property type="term" value="F:protein tag activity"/>
    <property type="evidence" value="ECO:0007669"/>
    <property type="project" value="EnsemblFungi"/>
</dbReference>
<dbReference type="GO" id="GO:0097163">
    <property type="term" value="F:sulfur carrier activity"/>
    <property type="evidence" value="ECO:0007669"/>
    <property type="project" value="EnsemblFungi"/>
</dbReference>
<dbReference type="GO" id="GO:0007114">
    <property type="term" value="P:cell budding"/>
    <property type="evidence" value="ECO:0007669"/>
    <property type="project" value="EnsemblFungi"/>
</dbReference>
<dbReference type="GO" id="GO:0034599">
    <property type="term" value="P:cellular response to oxidative stress"/>
    <property type="evidence" value="ECO:0007669"/>
    <property type="project" value="EnsemblFungi"/>
</dbReference>
<dbReference type="GO" id="GO:0001403">
    <property type="term" value="P:invasive growth in response to glucose limitation"/>
    <property type="evidence" value="ECO:0007669"/>
    <property type="project" value="EnsemblFungi"/>
</dbReference>
<dbReference type="GO" id="GO:0032447">
    <property type="term" value="P:protein urmylation"/>
    <property type="evidence" value="ECO:0007669"/>
    <property type="project" value="UniProtKB-UniRule"/>
</dbReference>
<dbReference type="GO" id="GO:0002143">
    <property type="term" value="P:tRNA wobble position uridine thiolation"/>
    <property type="evidence" value="ECO:0007669"/>
    <property type="project" value="EnsemblFungi"/>
</dbReference>
<dbReference type="CDD" id="cd01764">
    <property type="entry name" value="Ubl_Urm1"/>
    <property type="match status" value="1"/>
</dbReference>
<dbReference type="Gene3D" id="3.10.20.30">
    <property type="match status" value="1"/>
</dbReference>
<dbReference type="HAMAP" id="MF_03048">
    <property type="entry name" value="Urm1"/>
    <property type="match status" value="1"/>
</dbReference>
<dbReference type="InterPro" id="IPR012675">
    <property type="entry name" value="Beta-grasp_dom_sf"/>
</dbReference>
<dbReference type="InterPro" id="IPR016155">
    <property type="entry name" value="Mopterin_synth/thiamin_S_b"/>
</dbReference>
<dbReference type="InterPro" id="IPR015221">
    <property type="entry name" value="Urm1"/>
</dbReference>
<dbReference type="PANTHER" id="PTHR14986">
    <property type="entry name" value="RURM1 PROTEIN"/>
    <property type="match status" value="1"/>
</dbReference>
<dbReference type="Pfam" id="PF09138">
    <property type="entry name" value="Urm1"/>
    <property type="match status" value="1"/>
</dbReference>
<dbReference type="PIRSF" id="PIRSF037379">
    <property type="entry name" value="Ubiquitin-related_modifier_1"/>
    <property type="match status" value="1"/>
</dbReference>
<dbReference type="SUPFAM" id="SSF54285">
    <property type="entry name" value="MoaD/ThiS"/>
    <property type="match status" value="1"/>
</dbReference>